<dbReference type="EC" id="3.1.3.16" evidence="3"/>
<dbReference type="EMBL" id="BX284605">
    <property type="protein sequence ID" value="CAA98265.1"/>
    <property type="molecule type" value="Genomic_DNA"/>
</dbReference>
<dbReference type="EMBL" id="BX284605">
    <property type="protein sequence ID" value="CAE54908.1"/>
    <property type="molecule type" value="Genomic_DNA"/>
</dbReference>
<dbReference type="EMBL" id="BX284605">
    <property type="protein sequence ID" value="CAP16273.1"/>
    <property type="molecule type" value="Genomic_DNA"/>
</dbReference>
<dbReference type="PIR" id="T21331">
    <property type="entry name" value="T21331"/>
</dbReference>
<dbReference type="RefSeq" id="NP_001023842.1">
    <molecule id="Q19775-1"/>
    <property type="nucleotide sequence ID" value="NM_001028671.4"/>
</dbReference>
<dbReference type="RefSeq" id="NP_001023843.1">
    <molecule id="Q19775-4"/>
    <property type="nucleotide sequence ID" value="NM_001028672.8"/>
</dbReference>
<dbReference type="RefSeq" id="NP_001122929.1">
    <molecule id="Q19775-5"/>
    <property type="nucleotide sequence ID" value="NM_001129457.4"/>
</dbReference>
<dbReference type="SMR" id="Q19775"/>
<dbReference type="DIP" id="DIP-25616N"/>
<dbReference type="FunCoup" id="Q19775">
    <property type="interactions" value="2780"/>
</dbReference>
<dbReference type="STRING" id="6239.F25D1.1a.1"/>
<dbReference type="PaxDb" id="6239-F25D1.1a"/>
<dbReference type="PeptideAtlas" id="Q19775"/>
<dbReference type="EnsemblMetazoa" id="F25D1.1a.1">
    <molecule id="Q19775-1"/>
    <property type="protein sequence ID" value="F25D1.1a.1"/>
    <property type="gene ID" value="WBGene00006460"/>
</dbReference>
<dbReference type="EnsemblMetazoa" id="F25D1.1b.1">
    <molecule id="Q19775-4"/>
    <property type="protein sequence ID" value="F25D1.1b.1"/>
    <property type="gene ID" value="WBGene00006460"/>
</dbReference>
<dbReference type="EnsemblMetazoa" id="F25D1.1c.1">
    <molecule id="Q19775-5"/>
    <property type="protein sequence ID" value="F25D1.1c.1"/>
    <property type="gene ID" value="WBGene00006460"/>
</dbReference>
<dbReference type="GeneID" id="179469"/>
<dbReference type="KEGG" id="cel:CELE_F25D1.1"/>
<dbReference type="UCSC" id="F25D1.1a">
    <property type="organism name" value="c. elegans"/>
</dbReference>
<dbReference type="AGR" id="WB:WBGene00006460"/>
<dbReference type="CTD" id="179469"/>
<dbReference type="WormBase" id="F25D1.1a">
    <molecule id="Q19775-1"/>
    <property type="protein sequence ID" value="CE05722"/>
    <property type="gene ID" value="WBGene00006460"/>
    <property type="gene designation" value="ppm-1.A"/>
</dbReference>
<dbReference type="WormBase" id="F25D1.1b">
    <molecule id="Q19775-4"/>
    <property type="protein sequence ID" value="CE36134"/>
    <property type="gene ID" value="WBGene00006460"/>
    <property type="gene designation" value="ppm-1.A"/>
</dbReference>
<dbReference type="WormBase" id="F25D1.1c">
    <molecule id="Q19775-5"/>
    <property type="protein sequence ID" value="CE41642"/>
    <property type="gene ID" value="WBGene00006460"/>
    <property type="gene designation" value="ppm-1.A"/>
</dbReference>
<dbReference type="eggNOG" id="KOG0697">
    <property type="taxonomic scope" value="Eukaryota"/>
</dbReference>
<dbReference type="GeneTree" id="ENSGT00940000165923"/>
<dbReference type="InParanoid" id="Q19775"/>
<dbReference type="OMA" id="GPGIRNQ"/>
<dbReference type="OrthoDB" id="10264738at2759"/>
<dbReference type="PhylomeDB" id="Q19775"/>
<dbReference type="Reactome" id="R-CEL-1169408">
    <property type="pathway name" value="ISG15 antiviral mechanism"/>
</dbReference>
<dbReference type="Reactome" id="R-CEL-2173795">
    <property type="pathway name" value="Downregulation of SMAD2/3:SMAD4 transcriptional activity"/>
</dbReference>
<dbReference type="Reactome" id="R-CEL-380972">
    <property type="pathway name" value="Energy dependent regulation of mTOR by LKB1-AMPK"/>
</dbReference>
<dbReference type="PRO" id="PR:Q19775"/>
<dbReference type="Proteomes" id="UP000001940">
    <property type="component" value="Chromosome V"/>
</dbReference>
<dbReference type="Bgee" id="WBGene00006460">
    <property type="expression patterns" value="Expressed in germ line (C elegans) and 4 other cell types or tissues"/>
</dbReference>
<dbReference type="GO" id="GO:0005829">
    <property type="term" value="C:cytosol"/>
    <property type="evidence" value="ECO:0000318"/>
    <property type="project" value="GO_Central"/>
</dbReference>
<dbReference type="GO" id="GO:0005634">
    <property type="term" value="C:nucleus"/>
    <property type="evidence" value="ECO:0000318"/>
    <property type="project" value="GO_Central"/>
</dbReference>
<dbReference type="GO" id="GO:0045202">
    <property type="term" value="C:synapse"/>
    <property type="evidence" value="ECO:0007669"/>
    <property type="project" value="UniProtKB-SubCell"/>
</dbReference>
<dbReference type="GO" id="GO:0046872">
    <property type="term" value="F:metal ion binding"/>
    <property type="evidence" value="ECO:0007669"/>
    <property type="project" value="UniProtKB-KW"/>
</dbReference>
<dbReference type="GO" id="GO:0004722">
    <property type="term" value="F:protein serine/threonine phosphatase activity"/>
    <property type="evidence" value="ECO:0000318"/>
    <property type="project" value="GO_Central"/>
</dbReference>
<dbReference type="GO" id="GO:0070373">
    <property type="term" value="P:negative regulation of ERK1 and ERK2 cascade"/>
    <property type="evidence" value="ECO:0000318"/>
    <property type="project" value="GO_Central"/>
</dbReference>
<dbReference type="GO" id="GO:0032873">
    <property type="term" value="P:negative regulation of stress-activated MAPK cascade"/>
    <property type="evidence" value="ECO:0000318"/>
    <property type="project" value="GO_Central"/>
</dbReference>
<dbReference type="CDD" id="cd00143">
    <property type="entry name" value="PP2Cc"/>
    <property type="match status" value="1"/>
</dbReference>
<dbReference type="FunFam" id="3.60.40.10:FF:000001">
    <property type="entry name" value="protein phosphatase 1B isoform X1"/>
    <property type="match status" value="1"/>
</dbReference>
<dbReference type="Gene3D" id="3.60.40.10">
    <property type="entry name" value="PPM-type phosphatase domain"/>
    <property type="match status" value="1"/>
</dbReference>
<dbReference type="InterPro" id="IPR015655">
    <property type="entry name" value="PP2C"/>
</dbReference>
<dbReference type="InterPro" id="IPR000222">
    <property type="entry name" value="PP2C_BS"/>
</dbReference>
<dbReference type="InterPro" id="IPR036457">
    <property type="entry name" value="PPM-type-like_dom_sf"/>
</dbReference>
<dbReference type="InterPro" id="IPR001932">
    <property type="entry name" value="PPM-type_phosphatase-like_dom"/>
</dbReference>
<dbReference type="PANTHER" id="PTHR47992">
    <property type="entry name" value="PROTEIN PHOSPHATASE"/>
    <property type="match status" value="1"/>
</dbReference>
<dbReference type="Pfam" id="PF00481">
    <property type="entry name" value="PP2C"/>
    <property type="match status" value="1"/>
</dbReference>
<dbReference type="SMART" id="SM00332">
    <property type="entry name" value="PP2Cc"/>
    <property type="match status" value="1"/>
</dbReference>
<dbReference type="SUPFAM" id="SSF81606">
    <property type="entry name" value="PP2C-like"/>
    <property type="match status" value="1"/>
</dbReference>
<dbReference type="PROSITE" id="PS01032">
    <property type="entry name" value="PPM_1"/>
    <property type="match status" value="1"/>
</dbReference>
<dbReference type="PROSITE" id="PS51746">
    <property type="entry name" value="PPM_2"/>
    <property type="match status" value="1"/>
</dbReference>
<reference evidence="8" key="1">
    <citation type="journal article" date="1998" name="Science">
        <title>Genome sequence of the nematode C. elegans: a platform for investigating biology.</title>
        <authorList>
            <consortium name="The C. elegans sequencing consortium"/>
        </authorList>
    </citation>
    <scope>NUCLEOTIDE SEQUENCE [LARGE SCALE GENOMIC DNA]</scope>
    <source>
        <strain evidence="8">Bristol N2</strain>
    </source>
</reference>
<reference evidence="7" key="2">
    <citation type="journal article" date="2011" name="Genetics">
        <title>PPM-1, a PP2Calpha/beta phosphatase, regulates axon termination and synapse formation in Caenorhabditis elegans.</title>
        <authorList>
            <person name="Tulgren E.D."/>
            <person name="Baker S.T."/>
            <person name="Rapp L."/>
            <person name="Gurney A.M."/>
            <person name="Grill B."/>
        </authorList>
    </citation>
    <scope>FUNCTION</scope>
    <scope>SUBCELLULAR LOCATION</scope>
    <scope>TISSUE SPECIFICITY</scope>
    <scope>DISRUPTION PHENOTYPE</scope>
    <scope>MUTAGENESIS OF ASP-329</scope>
</reference>
<proteinExistence type="evidence at protein level"/>
<gene>
    <name evidence="9" type="primary">ppm-1.A</name>
    <name evidence="9" type="ORF">F25D1.1</name>
</gene>
<accession>Q19775</accession>
<accession>A8WHR6</accession>
<accession>Q7JLJ3</accession>
<feature type="chain" id="PRO_0000436100" description="Protein phosphatase ppm-1.A" evidence="7">
    <location>
        <begin position="1"/>
        <end position="468"/>
    </location>
</feature>
<feature type="domain" description="PPM-type phosphatase" evidence="3">
    <location>
        <begin position="106"/>
        <end position="381"/>
    </location>
</feature>
<feature type="region of interest" description="Disordered" evidence="5">
    <location>
        <begin position="1"/>
        <end position="23"/>
    </location>
</feature>
<feature type="binding site" evidence="2">
    <location>
        <position position="145"/>
    </location>
    <ligand>
        <name>Mn(2+)</name>
        <dbReference type="ChEBI" id="CHEBI:29035"/>
        <label>1</label>
    </ligand>
</feature>
<feature type="binding site" evidence="1">
    <location>
        <position position="145"/>
    </location>
    <ligand>
        <name>Mn(2+)</name>
        <dbReference type="ChEBI" id="CHEBI:29035"/>
        <label>2</label>
    </ligand>
</feature>
<feature type="binding site" evidence="2">
    <location>
        <position position="146"/>
    </location>
    <ligand>
        <name>Mn(2+)</name>
        <dbReference type="ChEBI" id="CHEBI:29035"/>
        <label>1</label>
    </ligand>
</feature>
<feature type="binding site" evidence="1">
    <location>
        <position position="329"/>
    </location>
    <ligand>
        <name>Mn(2+)</name>
        <dbReference type="ChEBI" id="CHEBI:29035"/>
        <label>2</label>
    </ligand>
</feature>
<feature type="binding site" evidence="1">
    <location>
        <position position="372"/>
    </location>
    <ligand>
        <name>Mn(2+)</name>
        <dbReference type="ChEBI" id="CHEBI:29035"/>
        <label>2</label>
    </ligand>
</feature>
<feature type="splice variant" id="VSP_058263" description="In isoform b." evidence="7">
    <original>MTISRADLQIASSAEPKTHGNLNESFAPEIRQTASTIASLSIFGTPSDQECQPIPVVPRSSSSDELRVWRVTSAGLVEVDAKTMGAFLDKPKTDKTNVHGEGNGIR</original>
    <variation>MEKEI</variation>
    <location>
        <begin position="1"/>
        <end position="106"/>
    </location>
</feature>
<feature type="splice variant" id="VSP_058264" description="In isoform c." evidence="7">
    <location>
        <begin position="1"/>
        <end position="83"/>
    </location>
</feature>
<feature type="mutagenesis site" description="Probable loss of phosphatase activity. No rescue of abnormal axon termination in a fsn-1 mutant background." evidence="6">
    <original>D</original>
    <variation>N</variation>
    <location>
        <position position="329"/>
    </location>
</feature>
<organism evidence="8">
    <name type="scientific">Caenorhabditis elegans</name>
    <dbReference type="NCBI Taxonomy" id="6239"/>
    <lineage>
        <taxon>Eukaryota</taxon>
        <taxon>Metazoa</taxon>
        <taxon>Ecdysozoa</taxon>
        <taxon>Nematoda</taxon>
        <taxon>Chromadorea</taxon>
        <taxon>Rhabditida</taxon>
        <taxon>Rhabditina</taxon>
        <taxon>Rhabditomorpha</taxon>
        <taxon>Rhabditoidea</taxon>
        <taxon>Rhabditidae</taxon>
        <taxon>Peloderinae</taxon>
        <taxon>Caenorhabditis</taxon>
    </lineage>
</organism>
<evidence type="ECO:0000250" key="1">
    <source>
        <dbReference type="UniProtKB" id="O75688"/>
    </source>
</evidence>
<evidence type="ECO:0000250" key="2">
    <source>
        <dbReference type="UniProtKB" id="Q9CAJ0"/>
    </source>
</evidence>
<evidence type="ECO:0000255" key="3">
    <source>
        <dbReference type="PROSITE-ProRule" id="PRU01082"/>
    </source>
</evidence>
<evidence type="ECO:0000255" key="4">
    <source>
        <dbReference type="RuleBase" id="RU003465"/>
    </source>
</evidence>
<evidence type="ECO:0000256" key="5">
    <source>
        <dbReference type="SAM" id="MobiDB-lite"/>
    </source>
</evidence>
<evidence type="ECO:0000269" key="6">
    <source>
    </source>
</evidence>
<evidence type="ECO:0000305" key="7"/>
<evidence type="ECO:0000312" key="8">
    <source>
        <dbReference type="Proteomes" id="UP000001940"/>
    </source>
</evidence>
<evidence type="ECO:0000312" key="9">
    <source>
        <dbReference type="WormBase" id="F25D1.1a"/>
    </source>
</evidence>
<evidence type="ECO:0000312" key="10">
    <source>
        <dbReference type="WormBase" id="F25D1.1b"/>
    </source>
</evidence>
<evidence type="ECO:0000312" key="11">
    <source>
        <dbReference type="WormBase" id="F25D1.1c"/>
    </source>
</evidence>
<sequence length="468" mass="51899">MTISRADLQIASSAEPKTHGNLNESFAPEIRQTASTIASLSIFGTPSDQECQPIPVVPRSSSSDELRVWRVTSAGLVEVDAKTMGAFLDKPKTDKTNVHGEGNGIRYGMSSMQGWRICMEDSHIAEAIMSQSSPYKDWSFFAVFDGHAGHHIANRASSQLLEHLISSEEFREMTKTLEENNGVLTDSTLKLLEKGIKKGFLSFDEISKTSNDISKSGCTAVCAIVTPTHFIIGNLGDSRAVVAGKNEIFGTEDHKPYLEKERKRIEGAGGSVMIQRINGSLAVSRAFGDYEYKDDPRLPADQQLVSPEPDVYIRERNLENDQFMVVACDGIYDVMTNEELAEFVKDRLSVHSDLREVCDDVLDECLVKGSRDNMTMVVVCFPAAPEVNIHRKEAEEAWVSRVKTVINQFLDEAVAAEDFKQEEDMVTLKSILDKVTANGLLPTDLRVPEHTVTTLAQKILTQRDIKHV</sequence>
<keyword id="KW-0025">Alternative splicing</keyword>
<keyword id="KW-0378">Hydrolase</keyword>
<keyword id="KW-0460">Magnesium</keyword>
<keyword id="KW-0464">Manganese</keyword>
<keyword id="KW-0479">Metal-binding</keyword>
<keyword id="KW-0904">Protein phosphatase</keyword>
<keyword id="KW-1185">Reference proteome</keyword>
<keyword id="KW-0770">Synapse</keyword>
<protein>
    <recommendedName>
        <fullName evidence="7">Protein phosphatase ppm-1.A</fullName>
        <ecNumber evidence="3">3.1.3.16</ecNumber>
    </recommendedName>
    <alternativeName>
        <fullName evidence="7">Protein phosphatase 2C 1</fullName>
    </alternativeName>
    <alternativeName>
        <fullName evidence="9">Protein phosphatase Mg2+/Mn2+ dependent 1</fullName>
    </alternativeName>
</protein>
<name>PPM1A_CAEEL</name>
<comment type="function">
    <text evidence="6">Probable phosphatase which regulates axon termination in ALM and PLM neurons, and synaptic branch extension and/or stabilization in PLM neurons. Plays a role in synapse formation in GABAergic DD motor neurons probably by dephosphorylating pmk-3 thereby negatively regulating a MAP kinase pathway that includes dlk-1, mkk-4 and pmk-3.</text>
</comment>
<comment type="catalytic activity">
    <reaction evidence="3">
        <text>O-phospho-L-seryl-[protein] + H2O = L-seryl-[protein] + phosphate</text>
        <dbReference type="Rhea" id="RHEA:20629"/>
        <dbReference type="Rhea" id="RHEA-COMP:9863"/>
        <dbReference type="Rhea" id="RHEA-COMP:11604"/>
        <dbReference type="ChEBI" id="CHEBI:15377"/>
        <dbReference type="ChEBI" id="CHEBI:29999"/>
        <dbReference type="ChEBI" id="CHEBI:43474"/>
        <dbReference type="ChEBI" id="CHEBI:83421"/>
        <dbReference type="EC" id="3.1.3.16"/>
    </reaction>
</comment>
<comment type="catalytic activity">
    <reaction evidence="3">
        <text>O-phospho-L-threonyl-[protein] + H2O = L-threonyl-[protein] + phosphate</text>
        <dbReference type="Rhea" id="RHEA:47004"/>
        <dbReference type="Rhea" id="RHEA-COMP:11060"/>
        <dbReference type="Rhea" id="RHEA-COMP:11605"/>
        <dbReference type="ChEBI" id="CHEBI:15377"/>
        <dbReference type="ChEBI" id="CHEBI:30013"/>
        <dbReference type="ChEBI" id="CHEBI:43474"/>
        <dbReference type="ChEBI" id="CHEBI:61977"/>
        <dbReference type="EC" id="3.1.3.16"/>
    </reaction>
</comment>
<comment type="cofactor">
    <cofactor evidence="3">
        <name>Mg(2+)</name>
        <dbReference type="ChEBI" id="CHEBI:18420"/>
    </cofactor>
    <cofactor evidence="3">
        <name>Mn(2+)</name>
        <dbReference type="ChEBI" id="CHEBI:29035"/>
    </cofactor>
    <text evidence="3">Binds 2 magnesium or manganese ions per subunit.</text>
</comment>
<comment type="subcellular location">
    <subcellularLocation>
        <location evidence="6">Synapse</location>
    </subcellularLocation>
    <text evidence="6">Localizes to presynaptic terminals of motor neurons in the dorsal nerve cord.</text>
</comment>
<comment type="alternative products">
    <event type="alternative splicing"/>
    <isoform>
        <id>Q19775-1</id>
        <name evidence="9">a</name>
        <sequence type="displayed"/>
    </isoform>
    <isoform>
        <id>Q19775-4</id>
        <name evidence="10">b</name>
        <sequence type="described" ref="VSP_058263"/>
    </isoform>
    <isoform>
        <id>Q19775-5</id>
        <name evidence="11">c</name>
        <sequence type="described" ref="VSP_058264"/>
    </isoform>
</comment>
<comment type="tissue specificity">
    <text evidence="6">Expressed in neurons of the nerve ring and motor neurons of the ventral nerve cord.</text>
</comment>
<comment type="disruption phenotype">
    <text evidence="6">Approximately 15 percent of mutants have an overextension of the axon of ALM neurons which terminates with a small hook. Approximately 30 percent of mutants have an overextension of the axon of PLM neurons. Approximately 10 percent of mutants lack synaptic branch extension in PLM neurons.</text>
</comment>
<comment type="similarity">
    <text evidence="4">Belongs to the PP2C family.</text>
</comment>